<proteinExistence type="evidence at protein level"/>
<comment type="function">
    <text evidence="6 7 10">Required for G1/S transition. Plays a role in DNA replication checkpoint signaling through regulating rad3 and cds1. Involved in the maintenance of mitotic chromosome structures during S phase through regulating the function of rad21. Required for initiation of mitotic DNA replication through phosphorylating mcm2/cdc19. Required for genome integrity.</text>
</comment>
<comment type="catalytic activity">
    <reaction>
        <text>L-seryl-[protein] + ATP = O-phospho-L-seryl-[protein] + ADP + H(+)</text>
        <dbReference type="Rhea" id="RHEA:17989"/>
        <dbReference type="Rhea" id="RHEA-COMP:9863"/>
        <dbReference type="Rhea" id="RHEA-COMP:11604"/>
        <dbReference type="ChEBI" id="CHEBI:15378"/>
        <dbReference type="ChEBI" id="CHEBI:29999"/>
        <dbReference type="ChEBI" id="CHEBI:30616"/>
        <dbReference type="ChEBI" id="CHEBI:83421"/>
        <dbReference type="ChEBI" id="CHEBI:456216"/>
        <dbReference type="EC" id="2.7.11.1"/>
    </reaction>
</comment>
<comment type="catalytic activity">
    <reaction>
        <text>L-threonyl-[protein] + ATP = O-phospho-L-threonyl-[protein] + ADP + H(+)</text>
        <dbReference type="Rhea" id="RHEA:46608"/>
        <dbReference type="Rhea" id="RHEA-COMP:11060"/>
        <dbReference type="Rhea" id="RHEA-COMP:11605"/>
        <dbReference type="ChEBI" id="CHEBI:15378"/>
        <dbReference type="ChEBI" id="CHEBI:30013"/>
        <dbReference type="ChEBI" id="CHEBI:30616"/>
        <dbReference type="ChEBI" id="CHEBI:61977"/>
        <dbReference type="ChEBI" id="CHEBI:456216"/>
        <dbReference type="EC" id="2.7.11.1"/>
    </reaction>
</comment>
<comment type="activity regulation">
    <text evidence="5">Phosphorylation of exogenous substrates activated by Dfp1.</text>
</comment>
<comment type="subunit">
    <text evidence="5 8 10">Heterodimer with the regulatory subunit him1/dfp1. May form homooligomeric complexes. Interacts with mcm10.</text>
</comment>
<comment type="interaction">
    <interactant intactId="EBI-908476">
        <id>P50582</id>
    </interactant>
    <interactant intactId="EBI-1387246">
        <id>O42709</id>
        <label>mcm10</label>
    </interactant>
    <organismsDiffer>false</organismsDiffer>
    <experiments>3</experiments>
</comment>
<comment type="interaction">
    <interactant intactId="EBI-908476">
        <id>P50582</id>
    </interactant>
    <interactant intactId="EBI-783248">
        <id>P40377</id>
        <label>mcm2</label>
    </interactant>
    <organismsDiffer>false</organismsDiffer>
    <experiments>2</experiments>
</comment>
<comment type="interaction">
    <interactant intactId="EBI-908476">
        <id>P50582</id>
    </interactant>
    <interactant intactId="EBI-926939">
        <id>P40381</id>
        <label>swi6</label>
    </interactant>
    <organismsDiffer>false</organismsDiffer>
    <experiments>2</experiments>
</comment>
<comment type="subcellular location">
    <subcellularLocation>
        <location evidence="6">Nucleus</location>
    </subcellularLocation>
    <text>Nuclear throughout the cell cycle.</text>
</comment>
<comment type="PTM">
    <text evidence="6 9">Autophosphorylated. Phosphorylated by cds1 in vitro.</text>
</comment>
<comment type="similarity">
    <text evidence="2">Belongs to the protein kinase superfamily. Ser/Thr protein kinase family. CDC7 subfamily.</text>
</comment>
<sequence length="507" mass="58408">MAEAHITLSPKVTHEQQTDIDSECEITEVDDENVNENKSQEMIQDIPARDREEIENITRTFVELQENYRLIEKIGEGTFSSVYKAEDLHYGRYINDWDIQSEVLKESSFGKEKIPVNEDSRKPKYVAIKKIYATSSPARIYNELEILYLLRGSSVIAPLITALRNEDQVLVVLPYYEHTDFRQYYSTFSYRDMSIYFRCLFQAMQQTQTLGIIHRDIKPSNFLFDVRTKHGVLVDFGLAERYDGRQQSHSCRCTNSNAAELAHDFSIAQETSLGYIKNDTRPSKRANRAGTRGFRAPEVLFKCSSQSPKVDIWSAGVILLSFLTKRFPMFNSKDDVDALMEIACIFGKSEMRQCAALHGCTFETNVSTLTEKRVNFRKLILWASCGSASIYKEKLRHKPSQEERLCLDFLEKCLELDCNKRISAEEALDHDFLYLDNLAYEKKDDDTAFDNSFGETSFEKDEDLTAKHLSHILDFKEQEETDEPTSLSKRKRSIDEILPNDALQDGA</sequence>
<feature type="chain" id="PRO_0000086003" description="Cell cycle serine/threonine-protein kinase hsk1">
    <location>
        <begin position="1"/>
        <end position="507"/>
    </location>
</feature>
<feature type="domain" description="Protein kinase" evidence="2">
    <location>
        <begin position="68"/>
        <end position="433"/>
    </location>
</feature>
<feature type="region of interest" description="Disordered" evidence="4">
    <location>
        <begin position="475"/>
        <end position="507"/>
    </location>
</feature>
<feature type="active site" description="Proton acceptor" evidence="2 3">
    <location>
        <position position="216"/>
    </location>
</feature>
<feature type="binding site" evidence="2">
    <location>
        <begin position="74"/>
        <end position="82"/>
    </location>
    <ligand>
        <name>ATP</name>
        <dbReference type="ChEBI" id="CHEBI:30616"/>
    </ligand>
</feature>
<feature type="binding site" evidence="2">
    <location>
        <position position="129"/>
    </location>
    <ligand>
        <name>ATP</name>
        <dbReference type="ChEBI" id="CHEBI:30616"/>
    </ligand>
</feature>
<feature type="modified residue" description="Phosphoserine" evidence="9">
    <location>
        <position position="22"/>
    </location>
</feature>
<feature type="modified residue" description="Phosphothreonine" evidence="1">
    <location>
        <position position="291"/>
    </location>
</feature>
<feature type="modified residue" description="Phosphoserine" evidence="9">
    <location>
        <position position="493"/>
    </location>
</feature>
<feature type="mutagenesis site" description="Reduced activity." evidence="10">
    <original>K</original>
    <variation>A</variation>
    <location>
        <position position="129"/>
    </location>
</feature>
<feature type="mutagenesis site" description="Reduced activity." evidence="10">
    <original>D</original>
    <variation>N</variation>
    <location>
        <position position="216"/>
    </location>
</feature>
<feature type="mutagenesis site" description="Inactive." evidence="10">
    <original>T</original>
    <variation>A</variation>
    <variation>E</variation>
    <location>
        <position position="291"/>
    </location>
</feature>
<feature type="mutagenesis site" description="Temperature-sensitive phenotype. Defects in DNA replication and checkpoint responses." evidence="6">
    <original>S</original>
    <variation>I</variation>
    <location>
        <position position="314"/>
    </location>
</feature>
<feature type="mutagenesis site" description="Reduced activity; when associated with K-403 and P-416." evidence="7">
    <original>D</original>
    <variation>P</variation>
    <location>
        <position position="337"/>
    </location>
</feature>
<feature type="mutagenesis site" description="Reduced activity; when associated With P-337 and P-416." evidence="7">
    <original>E</original>
    <variation>K</variation>
    <location>
        <position position="403"/>
    </location>
</feature>
<feature type="mutagenesis site" description="Reduced activity; when associated With P-337 and K-403." evidence="7">
    <original>L</original>
    <variation>P</variation>
    <location>
        <position position="416"/>
    </location>
</feature>
<name>HSK1_SCHPO</name>
<dbReference type="EC" id="2.7.11.1"/>
<dbReference type="EMBL" id="D50493">
    <property type="protein sequence ID" value="BAA09087.1"/>
    <property type="molecule type" value="Genomic_DNA"/>
</dbReference>
<dbReference type="EMBL" id="CU329671">
    <property type="protein sequence ID" value="CAA22885.1"/>
    <property type="molecule type" value="Genomic_DNA"/>
</dbReference>
<dbReference type="PIR" id="S56143">
    <property type="entry name" value="S56143"/>
</dbReference>
<dbReference type="PIR" id="T40683">
    <property type="entry name" value="T40683"/>
</dbReference>
<dbReference type="RefSeq" id="NP_596328.1">
    <property type="nucleotide sequence ID" value="NM_001022249.2"/>
</dbReference>
<dbReference type="SMR" id="P50582"/>
<dbReference type="BioGRID" id="277680">
    <property type="interactions" value="42"/>
</dbReference>
<dbReference type="FunCoup" id="P50582">
    <property type="interactions" value="537"/>
</dbReference>
<dbReference type="IntAct" id="P50582">
    <property type="interactions" value="6"/>
</dbReference>
<dbReference type="STRING" id="284812.P50582"/>
<dbReference type="iPTMnet" id="P50582"/>
<dbReference type="PaxDb" id="4896-SPBC776.12c.1"/>
<dbReference type="EnsemblFungi" id="SPBC776.12c.1">
    <property type="protein sequence ID" value="SPBC776.12c.1:pep"/>
    <property type="gene ID" value="SPBC776.12c"/>
</dbReference>
<dbReference type="GeneID" id="2541165"/>
<dbReference type="KEGG" id="spo:2541165"/>
<dbReference type="PomBase" id="SPBC776.12c">
    <property type="gene designation" value="hsk1"/>
</dbReference>
<dbReference type="VEuPathDB" id="FungiDB:SPBC776.12c"/>
<dbReference type="eggNOG" id="KOG1167">
    <property type="taxonomic scope" value="Eukaryota"/>
</dbReference>
<dbReference type="HOGENOM" id="CLU_000288_118_2_1"/>
<dbReference type="InParanoid" id="P50582"/>
<dbReference type="OMA" id="QGFTMEK"/>
<dbReference type="PhylomeDB" id="P50582"/>
<dbReference type="BRENDA" id="2.7.11.1">
    <property type="organism ID" value="5613"/>
</dbReference>
<dbReference type="Reactome" id="R-SPO-176187">
    <property type="pathway name" value="Activation of ATR in response to replication stress"/>
</dbReference>
<dbReference type="Reactome" id="R-SPO-68962">
    <property type="pathway name" value="Activation of the pre-replicative complex"/>
</dbReference>
<dbReference type="PRO" id="PR:P50582"/>
<dbReference type="Proteomes" id="UP000002485">
    <property type="component" value="Chromosome II"/>
</dbReference>
<dbReference type="GO" id="GO:0005737">
    <property type="term" value="C:cytoplasm"/>
    <property type="evidence" value="ECO:0000318"/>
    <property type="project" value="GO_Central"/>
</dbReference>
<dbReference type="GO" id="GO:0031431">
    <property type="term" value="C:Dbf4-dependent protein kinase complex"/>
    <property type="evidence" value="ECO:0000314"/>
    <property type="project" value="PomBase"/>
</dbReference>
<dbReference type="GO" id="GO:0005634">
    <property type="term" value="C:nucleus"/>
    <property type="evidence" value="ECO:0000314"/>
    <property type="project" value="UniProtKB"/>
</dbReference>
<dbReference type="GO" id="GO:0005524">
    <property type="term" value="F:ATP binding"/>
    <property type="evidence" value="ECO:0000314"/>
    <property type="project" value="UniProtKB"/>
</dbReference>
<dbReference type="GO" id="GO:0106310">
    <property type="term" value="F:protein serine kinase activity"/>
    <property type="evidence" value="ECO:0007669"/>
    <property type="project" value="RHEA"/>
</dbReference>
<dbReference type="GO" id="GO:0004674">
    <property type="term" value="F:protein serine/threonine kinase activity"/>
    <property type="evidence" value="ECO:0000314"/>
    <property type="project" value="UniProtKB"/>
</dbReference>
<dbReference type="GO" id="GO:0051301">
    <property type="term" value="P:cell division"/>
    <property type="evidence" value="ECO:0007669"/>
    <property type="project" value="UniProtKB-KW"/>
</dbReference>
<dbReference type="GO" id="GO:0000076">
    <property type="term" value="P:DNA replication checkpoint signaling"/>
    <property type="evidence" value="ECO:0000315"/>
    <property type="project" value="UniProtKB"/>
</dbReference>
<dbReference type="GO" id="GO:0006270">
    <property type="term" value="P:DNA replication initiation"/>
    <property type="evidence" value="ECO:0000315"/>
    <property type="project" value="UniProtKB"/>
</dbReference>
<dbReference type="GO" id="GO:0000727">
    <property type="term" value="P:double-strand break repair via break-induced replication"/>
    <property type="evidence" value="ECO:0000318"/>
    <property type="project" value="GO_Central"/>
</dbReference>
<dbReference type="GO" id="GO:0000082">
    <property type="term" value="P:G1/S transition of mitotic cell cycle"/>
    <property type="evidence" value="ECO:0000315"/>
    <property type="project" value="UniProtKB"/>
</dbReference>
<dbReference type="GO" id="GO:0033314">
    <property type="term" value="P:mitotic DNA replication checkpoint signaling"/>
    <property type="evidence" value="ECO:0000315"/>
    <property type="project" value="PomBase"/>
</dbReference>
<dbReference type="GO" id="GO:0031573">
    <property type="term" value="P:mitotic intra-S DNA damage checkpoint signaling"/>
    <property type="evidence" value="ECO:0000315"/>
    <property type="project" value="PomBase"/>
</dbReference>
<dbReference type="GO" id="GO:0045739">
    <property type="term" value="P:positive regulation of DNA repair"/>
    <property type="evidence" value="ECO:0000315"/>
    <property type="project" value="PomBase"/>
</dbReference>
<dbReference type="GO" id="GO:1903468">
    <property type="term" value="P:positive regulation of DNA replication initiation"/>
    <property type="evidence" value="ECO:0000315"/>
    <property type="project" value="PomBase"/>
</dbReference>
<dbReference type="GO" id="GO:0007165">
    <property type="term" value="P:signal transduction"/>
    <property type="evidence" value="ECO:0000318"/>
    <property type="project" value="GO_Central"/>
</dbReference>
<dbReference type="CDD" id="cd14019">
    <property type="entry name" value="STKc_Cdc7"/>
    <property type="match status" value="1"/>
</dbReference>
<dbReference type="Gene3D" id="3.30.200.20">
    <property type="entry name" value="Phosphorylase Kinase, domain 1"/>
    <property type="match status" value="1"/>
</dbReference>
<dbReference type="Gene3D" id="1.10.510.10">
    <property type="entry name" value="Transferase(Phosphotransferase) domain 1"/>
    <property type="match status" value="1"/>
</dbReference>
<dbReference type="InterPro" id="IPR011009">
    <property type="entry name" value="Kinase-like_dom_sf"/>
</dbReference>
<dbReference type="InterPro" id="IPR000719">
    <property type="entry name" value="Prot_kinase_dom"/>
</dbReference>
<dbReference type="InterPro" id="IPR008271">
    <property type="entry name" value="Ser/Thr_kinase_AS"/>
</dbReference>
<dbReference type="PANTHER" id="PTHR44167:SF23">
    <property type="entry name" value="CDC7 KINASE, ISOFORM A-RELATED"/>
    <property type="match status" value="1"/>
</dbReference>
<dbReference type="PANTHER" id="PTHR44167">
    <property type="entry name" value="OVARIAN-SPECIFIC SERINE/THREONINE-PROTEIN KINASE LOK-RELATED"/>
    <property type="match status" value="1"/>
</dbReference>
<dbReference type="Pfam" id="PF00069">
    <property type="entry name" value="Pkinase"/>
    <property type="match status" value="1"/>
</dbReference>
<dbReference type="SMART" id="SM00220">
    <property type="entry name" value="S_TKc"/>
    <property type="match status" value="1"/>
</dbReference>
<dbReference type="SUPFAM" id="SSF56112">
    <property type="entry name" value="Protein kinase-like (PK-like)"/>
    <property type="match status" value="1"/>
</dbReference>
<dbReference type="PROSITE" id="PS50011">
    <property type="entry name" value="PROTEIN_KINASE_DOM"/>
    <property type="match status" value="1"/>
</dbReference>
<dbReference type="PROSITE" id="PS00108">
    <property type="entry name" value="PROTEIN_KINASE_ST"/>
    <property type="match status" value="1"/>
</dbReference>
<gene>
    <name type="primary">hsk1</name>
    <name type="ORF">SPBC776.12c</name>
</gene>
<evidence type="ECO:0000250" key="1"/>
<evidence type="ECO:0000255" key="2">
    <source>
        <dbReference type="PROSITE-ProRule" id="PRU00159"/>
    </source>
</evidence>
<evidence type="ECO:0000255" key="3">
    <source>
        <dbReference type="PROSITE-ProRule" id="PRU10027"/>
    </source>
</evidence>
<evidence type="ECO:0000256" key="4">
    <source>
        <dbReference type="SAM" id="MobiDB-lite"/>
    </source>
</evidence>
<evidence type="ECO:0000269" key="5">
    <source>
    </source>
</evidence>
<evidence type="ECO:0000269" key="6">
    <source>
    </source>
</evidence>
<evidence type="ECO:0000269" key="7">
    <source>
    </source>
</evidence>
<evidence type="ECO:0000269" key="8">
    <source>
    </source>
</evidence>
<evidence type="ECO:0000269" key="9">
    <source>
    </source>
</evidence>
<evidence type="ECO:0000269" key="10">
    <source>
    </source>
</evidence>
<protein>
    <recommendedName>
        <fullName>Cell cycle serine/threonine-protein kinase hsk1</fullName>
        <ecNumber>2.7.11.1</ecNumber>
    </recommendedName>
    <alternativeName>
        <fullName>Cdc7-related kinase</fullName>
    </alternativeName>
    <alternativeName>
        <fullName>Minichromosome maintenance protein kinase</fullName>
    </alternativeName>
</protein>
<keyword id="KW-0067">ATP-binding</keyword>
<keyword id="KW-0131">Cell cycle</keyword>
<keyword id="KW-0132">Cell division</keyword>
<keyword id="KW-0418">Kinase</keyword>
<keyword id="KW-0547">Nucleotide-binding</keyword>
<keyword id="KW-0539">Nucleus</keyword>
<keyword id="KW-0597">Phosphoprotein</keyword>
<keyword id="KW-1185">Reference proteome</keyword>
<keyword id="KW-0723">Serine/threonine-protein kinase</keyword>
<keyword id="KW-0808">Transferase</keyword>
<accession>P50582</accession>
<accession>O94678</accession>
<reference key="1">
    <citation type="journal article" date="1995" name="EMBO J.">
        <title>hsk1+, a Schizosaccharomyces pombe gene related to Saccharomyces cerevisiae CDC7, is required for chromosomal replication.</title>
        <authorList>
            <person name="Masai H."/>
            <person name="Miyake T."/>
            <person name="Arai K."/>
        </authorList>
    </citation>
    <scope>NUCLEOTIDE SEQUENCE [GENOMIC DNA]</scope>
    <source>
        <strain>JY2</strain>
    </source>
</reference>
<reference key="2">
    <citation type="journal article" date="2002" name="Nature">
        <title>The genome sequence of Schizosaccharomyces pombe.</title>
        <authorList>
            <person name="Wood V."/>
            <person name="Gwilliam R."/>
            <person name="Rajandream M.A."/>
            <person name="Lyne M.H."/>
            <person name="Lyne R."/>
            <person name="Stewart A."/>
            <person name="Sgouros J.G."/>
            <person name="Peat N."/>
            <person name="Hayles J."/>
            <person name="Baker S.G."/>
            <person name="Basham D."/>
            <person name="Bowman S."/>
            <person name="Brooks K."/>
            <person name="Brown D."/>
            <person name="Brown S."/>
            <person name="Chillingworth T."/>
            <person name="Churcher C.M."/>
            <person name="Collins M."/>
            <person name="Connor R."/>
            <person name="Cronin A."/>
            <person name="Davis P."/>
            <person name="Feltwell T."/>
            <person name="Fraser A."/>
            <person name="Gentles S."/>
            <person name="Goble A."/>
            <person name="Hamlin N."/>
            <person name="Harris D.E."/>
            <person name="Hidalgo J."/>
            <person name="Hodgson G."/>
            <person name="Holroyd S."/>
            <person name="Hornsby T."/>
            <person name="Howarth S."/>
            <person name="Huckle E.J."/>
            <person name="Hunt S."/>
            <person name="Jagels K."/>
            <person name="James K.D."/>
            <person name="Jones L."/>
            <person name="Jones M."/>
            <person name="Leather S."/>
            <person name="McDonald S."/>
            <person name="McLean J."/>
            <person name="Mooney P."/>
            <person name="Moule S."/>
            <person name="Mungall K.L."/>
            <person name="Murphy L.D."/>
            <person name="Niblett D."/>
            <person name="Odell C."/>
            <person name="Oliver K."/>
            <person name="O'Neil S."/>
            <person name="Pearson D."/>
            <person name="Quail M.A."/>
            <person name="Rabbinowitsch E."/>
            <person name="Rutherford K.M."/>
            <person name="Rutter S."/>
            <person name="Saunders D."/>
            <person name="Seeger K."/>
            <person name="Sharp S."/>
            <person name="Skelton J."/>
            <person name="Simmonds M.N."/>
            <person name="Squares R."/>
            <person name="Squares S."/>
            <person name="Stevens K."/>
            <person name="Taylor K."/>
            <person name="Taylor R.G."/>
            <person name="Tivey A."/>
            <person name="Walsh S.V."/>
            <person name="Warren T."/>
            <person name="Whitehead S."/>
            <person name="Woodward J.R."/>
            <person name="Volckaert G."/>
            <person name="Aert R."/>
            <person name="Robben J."/>
            <person name="Grymonprez B."/>
            <person name="Weltjens I."/>
            <person name="Vanstreels E."/>
            <person name="Rieger M."/>
            <person name="Schaefer M."/>
            <person name="Mueller-Auer S."/>
            <person name="Gabel C."/>
            <person name="Fuchs M."/>
            <person name="Duesterhoeft A."/>
            <person name="Fritzc C."/>
            <person name="Holzer E."/>
            <person name="Moestl D."/>
            <person name="Hilbert H."/>
            <person name="Borzym K."/>
            <person name="Langer I."/>
            <person name="Beck A."/>
            <person name="Lehrach H."/>
            <person name="Reinhardt R."/>
            <person name="Pohl T.M."/>
            <person name="Eger P."/>
            <person name="Zimmermann W."/>
            <person name="Wedler H."/>
            <person name="Wambutt R."/>
            <person name="Purnelle B."/>
            <person name="Goffeau A."/>
            <person name="Cadieu E."/>
            <person name="Dreano S."/>
            <person name="Gloux S."/>
            <person name="Lelaure V."/>
            <person name="Mottier S."/>
            <person name="Galibert F."/>
            <person name="Aves S.J."/>
            <person name="Xiang Z."/>
            <person name="Hunt C."/>
            <person name="Moore K."/>
            <person name="Hurst S.M."/>
            <person name="Lucas M."/>
            <person name="Rochet M."/>
            <person name="Gaillardin C."/>
            <person name="Tallada V.A."/>
            <person name="Garzon A."/>
            <person name="Thode G."/>
            <person name="Daga R.R."/>
            <person name="Cruzado L."/>
            <person name="Jimenez J."/>
            <person name="Sanchez M."/>
            <person name="del Rey F."/>
            <person name="Benito J."/>
            <person name="Dominguez A."/>
            <person name="Revuelta J.L."/>
            <person name="Moreno S."/>
            <person name="Armstrong J."/>
            <person name="Forsburg S.L."/>
            <person name="Cerutti L."/>
            <person name="Lowe T."/>
            <person name="McCombie W.R."/>
            <person name="Paulsen I."/>
            <person name="Potashkin J."/>
            <person name="Shpakovski G.V."/>
            <person name="Ussery D."/>
            <person name="Barrell B.G."/>
            <person name="Nurse P."/>
        </authorList>
    </citation>
    <scope>NUCLEOTIDE SEQUENCE [LARGE SCALE GENOMIC DNA]</scope>
    <source>
        <strain>972 / ATCC 24843</strain>
    </source>
</reference>
<reference key="3">
    <citation type="journal article" date="1998" name="J. Biol. Chem.">
        <title>Purification of Hsk1, a minichromosome maintenance protein kinase from fission yeast.</title>
        <authorList>
            <person name="Brown G.W."/>
            <person name="Kelly T.J."/>
        </authorList>
    </citation>
    <scope>FUNCTION</scope>
    <scope>KINASE ACTIVITY</scope>
    <scope>SUBUNIT</scope>
    <scope>AUTOPHOSPHORYLATION</scope>
    <scope>MUTAGENESIS OF LYS-129; ASP-216 AND THR-291</scope>
</reference>
<reference key="4">
    <citation type="journal article" date="1999" name="Proc. Natl. Acad. Sci. U.S.A.">
        <title>Cell cycle regulation of Dfp1, an activator of the Hsk1 protein kinase.</title>
        <authorList>
            <person name="Brown G.W."/>
            <person name="Kelly T.J."/>
        </authorList>
    </citation>
    <scope>ACTIVITY REGULATION</scope>
    <scope>SUBUNIT</scope>
</reference>
<reference key="5">
    <citation type="journal article" date="2000" name="Mol. Cell. Biol.">
        <title>Schizosaccharomyces pombe Hsk1p is a potential cds1p target required for genome integrity.</title>
        <authorList>
            <person name="Snaith H.A."/>
            <person name="Brown G.W."/>
            <person name="Forsburg S.L."/>
        </authorList>
    </citation>
    <scope>FUNCTION</scope>
    <scope>SUBCELLULAR LOCATION</scope>
    <scope>AUTOPHOSPHORYLATION</scope>
    <scope>PHOSPHORYLATION BY CDS1</scope>
    <scope>MUTAGENESIS OF SER-314</scope>
</reference>
<reference key="6">
    <citation type="journal article" date="2001" name="Mol. Biol. Cell">
        <title>Regulation of initiation of S phase, replication checkpoint signaling, and maintenance of mitotic chromosome structures during S phase by Hsk1 kinase in the fission yeast.</title>
        <authorList>
            <person name="Takeda T."/>
            <person name="Ogino K."/>
            <person name="Tatebayashi K."/>
            <person name="Ikeda H."/>
            <person name="Arai K."/>
            <person name="Masai H."/>
        </authorList>
    </citation>
    <scope>FUNCTION</scope>
    <scope>KINASE ACTIVITY</scope>
    <scope>AUTOPHOSPHORYLATION</scope>
    <scope>MUTAGENESIS OF ASP-337; GLU-403 AND LEU-416</scope>
</reference>
<reference key="7">
    <citation type="journal article" date="2003" name="Proc. Natl. Acad. Sci. U.S.A.">
        <title>The Cdc23 (Mcm10) protein is required for the phosphorylation of minichromosome maintenance complex by the Dfp1-Hsk1 kinase.</title>
        <authorList>
            <person name="Lee J.-K."/>
            <person name="Seo Y.-S."/>
            <person name="Hurwitz J."/>
        </authorList>
    </citation>
    <scope>INTERACTION WITH MCM10</scope>
</reference>
<reference key="8">
    <citation type="journal article" date="2008" name="J. Proteome Res.">
        <title>Phosphoproteome analysis of fission yeast.</title>
        <authorList>
            <person name="Wilson-Grady J.T."/>
            <person name="Villen J."/>
            <person name="Gygi S.P."/>
        </authorList>
    </citation>
    <scope>PHOSPHORYLATION [LARGE SCALE ANALYSIS] AT SER-22 AND SER-493</scope>
    <scope>IDENTIFICATION BY MASS SPECTROMETRY</scope>
</reference>
<organism>
    <name type="scientific">Schizosaccharomyces pombe (strain 972 / ATCC 24843)</name>
    <name type="common">Fission yeast</name>
    <dbReference type="NCBI Taxonomy" id="284812"/>
    <lineage>
        <taxon>Eukaryota</taxon>
        <taxon>Fungi</taxon>
        <taxon>Dikarya</taxon>
        <taxon>Ascomycota</taxon>
        <taxon>Taphrinomycotina</taxon>
        <taxon>Schizosaccharomycetes</taxon>
        <taxon>Schizosaccharomycetales</taxon>
        <taxon>Schizosaccharomycetaceae</taxon>
        <taxon>Schizosaccharomyces</taxon>
    </lineage>
</organism>